<reference key="1">
    <citation type="submission" date="2007-04" db="EMBL/GenBank/DDBJ databases">
        <title>Complete sequence of Shewanella putrefaciens CN-32.</title>
        <authorList>
            <consortium name="US DOE Joint Genome Institute"/>
            <person name="Copeland A."/>
            <person name="Lucas S."/>
            <person name="Lapidus A."/>
            <person name="Barry K."/>
            <person name="Detter J.C."/>
            <person name="Glavina del Rio T."/>
            <person name="Hammon N."/>
            <person name="Israni S."/>
            <person name="Dalin E."/>
            <person name="Tice H."/>
            <person name="Pitluck S."/>
            <person name="Chain P."/>
            <person name="Malfatti S."/>
            <person name="Shin M."/>
            <person name="Vergez L."/>
            <person name="Schmutz J."/>
            <person name="Larimer F."/>
            <person name="Land M."/>
            <person name="Hauser L."/>
            <person name="Kyrpides N."/>
            <person name="Mikhailova N."/>
            <person name="Romine M.F."/>
            <person name="Fredrickson J."/>
            <person name="Tiedje J."/>
            <person name="Richardson P."/>
        </authorList>
    </citation>
    <scope>NUCLEOTIDE SEQUENCE [LARGE SCALE GENOMIC DNA]</scope>
    <source>
        <strain>CN-32 / ATCC BAA-453</strain>
    </source>
</reference>
<proteinExistence type="inferred from homology"/>
<keyword id="KW-1003">Cell membrane</keyword>
<keyword id="KW-0472">Membrane</keyword>
<keyword id="KW-0812">Transmembrane</keyword>
<keyword id="KW-1133">Transmembrane helix</keyword>
<sequence>MLGWTLMFLVVAIIAGLFGFTGIAGAAAGIAKIIFFLFIVLLVISLLVNAIKGRAPRP</sequence>
<organism>
    <name type="scientific">Shewanella putrefaciens (strain CN-32 / ATCC BAA-453)</name>
    <dbReference type="NCBI Taxonomy" id="319224"/>
    <lineage>
        <taxon>Bacteria</taxon>
        <taxon>Pseudomonadati</taxon>
        <taxon>Pseudomonadota</taxon>
        <taxon>Gammaproteobacteria</taxon>
        <taxon>Alteromonadales</taxon>
        <taxon>Shewanellaceae</taxon>
        <taxon>Shewanella</taxon>
    </lineage>
</organism>
<protein>
    <recommendedName>
        <fullName evidence="1">UPF0391 membrane protein Sputcn32_1322</fullName>
    </recommendedName>
</protein>
<name>Y1322_SHEPC</name>
<feature type="chain" id="PRO_0000314230" description="UPF0391 membrane protein Sputcn32_1322">
    <location>
        <begin position="1"/>
        <end position="58"/>
    </location>
</feature>
<feature type="transmembrane region" description="Helical" evidence="1">
    <location>
        <begin position="6"/>
        <end position="26"/>
    </location>
</feature>
<feature type="transmembrane region" description="Helical" evidence="1">
    <location>
        <begin position="28"/>
        <end position="48"/>
    </location>
</feature>
<evidence type="ECO:0000255" key="1">
    <source>
        <dbReference type="HAMAP-Rule" id="MF_01361"/>
    </source>
</evidence>
<accession>A4Y517</accession>
<comment type="subcellular location">
    <subcellularLocation>
        <location evidence="1">Cell membrane</location>
        <topology evidence="1">Multi-pass membrane protein</topology>
    </subcellularLocation>
</comment>
<comment type="similarity">
    <text evidence="1">Belongs to the UPF0391 family.</text>
</comment>
<dbReference type="EMBL" id="CP000681">
    <property type="protein sequence ID" value="ABP75050.1"/>
    <property type="molecule type" value="Genomic_DNA"/>
</dbReference>
<dbReference type="STRING" id="319224.Sputcn32_1322"/>
<dbReference type="KEGG" id="spc:Sputcn32_1322"/>
<dbReference type="eggNOG" id="COG5487">
    <property type="taxonomic scope" value="Bacteria"/>
</dbReference>
<dbReference type="HOGENOM" id="CLU_187346_1_0_6"/>
<dbReference type="GO" id="GO:0005886">
    <property type="term" value="C:plasma membrane"/>
    <property type="evidence" value="ECO:0007669"/>
    <property type="project" value="UniProtKB-SubCell"/>
</dbReference>
<dbReference type="HAMAP" id="MF_01361">
    <property type="entry name" value="UPF0391"/>
    <property type="match status" value="1"/>
</dbReference>
<dbReference type="InterPro" id="IPR009760">
    <property type="entry name" value="DUF1328"/>
</dbReference>
<dbReference type="NCBIfam" id="NF010228">
    <property type="entry name" value="PRK13682.1-3"/>
    <property type="match status" value="1"/>
</dbReference>
<dbReference type="NCBIfam" id="NF010229">
    <property type="entry name" value="PRK13682.1-4"/>
    <property type="match status" value="1"/>
</dbReference>
<dbReference type="Pfam" id="PF07043">
    <property type="entry name" value="DUF1328"/>
    <property type="match status" value="1"/>
</dbReference>
<dbReference type="PIRSF" id="PIRSF036466">
    <property type="entry name" value="UCP036466"/>
    <property type="match status" value="1"/>
</dbReference>
<gene>
    <name type="ordered locus">Sputcn32_1322</name>
</gene>